<organism>
    <name type="scientific">Methylibium petroleiphilum (strain ATCC BAA-1232 / LMG 22953 / PM1)</name>
    <dbReference type="NCBI Taxonomy" id="420662"/>
    <lineage>
        <taxon>Bacteria</taxon>
        <taxon>Pseudomonadati</taxon>
        <taxon>Pseudomonadota</taxon>
        <taxon>Betaproteobacteria</taxon>
        <taxon>Burkholderiales</taxon>
        <taxon>Sphaerotilaceae</taxon>
        <taxon>Methylibium</taxon>
    </lineage>
</organism>
<proteinExistence type="inferred from homology"/>
<reference key="1">
    <citation type="journal article" date="2007" name="J. Bacteriol.">
        <title>Whole-genome analysis of the methyl tert-butyl ether-degrading beta-proteobacterium Methylibium petroleiphilum PM1.</title>
        <authorList>
            <person name="Kane S.R."/>
            <person name="Chakicherla A.Y."/>
            <person name="Chain P.S.G."/>
            <person name="Schmidt R."/>
            <person name="Shin M.W."/>
            <person name="Legler T.C."/>
            <person name="Scow K.M."/>
            <person name="Larimer F.W."/>
            <person name="Lucas S.M."/>
            <person name="Richardson P.M."/>
            <person name="Hristova K.R."/>
        </authorList>
    </citation>
    <scope>NUCLEOTIDE SEQUENCE [LARGE SCALE GENOMIC DNA]</scope>
    <source>
        <strain>ATCC BAA-1232 / LMG 22953 / PM1</strain>
    </source>
</reference>
<comment type="function">
    <text evidence="1">Catalyzes the conversion of dihydroorotate to orotate with quinone as electron acceptor.</text>
</comment>
<comment type="catalytic activity">
    <reaction evidence="1">
        <text>(S)-dihydroorotate + a quinone = orotate + a quinol</text>
        <dbReference type="Rhea" id="RHEA:30187"/>
        <dbReference type="ChEBI" id="CHEBI:24646"/>
        <dbReference type="ChEBI" id="CHEBI:30839"/>
        <dbReference type="ChEBI" id="CHEBI:30864"/>
        <dbReference type="ChEBI" id="CHEBI:132124"/>
        <dbReference type="EC" id="1.3.5.2"/>
    </reaction>
</comment>
<comment type="cofactor">
    <cofactor evidence="1">
        <name>FMN</name>
        <dbReference type="ChEBI" id="CHEBI:58210"/>
    </cofactor>
    <text evidence="1">Binds 1 FMN per subunit.</text>
</comment>
<comment type="pathway">
    <text evidence="1">Pyrimidine metabolism; UMP biosynthesis via de novo pathway; orotate from (S)-dihydroorotate (quinone route): step 1/1.</text>
</comment>
<comment type="subunit">
    <text evidence="1">Monomer.</text>
</comment>
<comment type="subcellular location">
    <subcellularLocation>
        <location evidence="1">Cell membrane</location>
        <topology evidence="1">Peripheral membrane protein</topology>
    </subcellularLocation>
</comment>
<comment type="similarity">
    <text evidence="1">Belongs to the dihydroorotate dehydrogenase family. Type 2 subfamily.</text>
</comment>
<feature type="chain" id="PRO_1000024184" description="Dihydroorotate dehydrogenase (quinone)">
    <location>
        <begin position="1"/>
        <end position="344"/>
    </location>
</feature>
<feature type="active site" description="Nucleophile" evidence="1">
    <location>
        <position position="181"/>
    </location>
</feature>
<feature type="binding site" evidence="1">
    <location>
        <begin position="65"/>
        <end position="69"/>
    </location>
    <ligand>
        <name>FMN</name>
        <dbReference type="ChEBI" id="CHEBI:58210"/>
    </ligand>
</feature>
<feature type="binding site" evidence="1">
    <location>
        <position position="69"/>
    </location>
    <ligand>
        <name>substrate</name>
    </ligand>
</feature>
<feature type="binding site" evidence="1">
    <location>
        <position position="89"/>
    </location>
    <ligand>
        <name>FMN</name>
        <dbReference type="ChEBI" id="CHEBI:58210"/>
    </ligand>
</feature>
<feature type="binding site" evidence="1">
    <location>
        <begin position="114"/>
        <end position="118"/>
    </location>
    <ligand>
        <name>substrate</name>
    </ligand>
</feature>
<feature type="binding site" evidence="1">
    <location>
        <position position="145"/>
    </location>
    <ligand>
        <name>FMN</name>
        <dbReference type="ChEBI" id="CHEBI:58210"/>
    </ligand>
</feature>
<feature type="binding site" evidence="1">
    <location>
        <position position="178"/>
    </location>
    <ligand>
        <name>FMN</name>
        <dbReference type="ChEBI" id="CHEBI:58210"/>
    </ligand>
</feature>
<feature type="binding site" evidence="1">
    <location>
        <position position="178"/>
    </location>
    <ligand>
        <name>substrate</name>
    </ligand>
</feature>
<feature type="binding site" evidence="1">
    <location>
        <position position="183"/>
    </location>
    <ligand>
        <name>substrate</name>
    </ligand>
</feature>
<feature type="binding site" evidence="1">
    <location>
        <position position="223"/>
    </location>
    <ligand>
        <name>FMN</name>
        <dbReference type="ChEBI" id="CHEBI:58210"/>
    </ligand>
</feature>
<feature type="binding site" evidence="1">
    <location>
        <position position="251"/>
    </location>
    <ligand>
        <name>FMN</name>
        <dbReference type="ChEBI" id="CHEBI:58210"/>
    </ligand>
</feature>
<feature type="binding site" evidence="1">
    <location>
        <begin position="252"/>
        <end position="253"/>
    </location>
    <ligand>
        <name>substrate</name>
    </ligand>
</feature>
<feature type="binding site" evidence="1">
    <location>
        <position position="274"/>
    </location>
    <ligand>
        <name>FMN</name>
        <dbReference type="ChEBI" id="CHEBI:58210"/>
    </ligand>
</feature>
<feature type="binding site" evidence="1">
    <location>
        <position position="303"/>
    </location>
    <ligand>
        <name>FMN</name>
        <dbReference type="ChEBI" id="CHEBI:58210"/>
    </ligand>
</feature>
<feature type="binding site" evidence="1">
    <location>
        <begin position="324"/>
        <end position="325"/>
    </location>
    <ligand>
        <name>FMN</name>
        <dbReference type="ChEBI" id="CHEBI:58210"/>
    </ligand>
</feature>
<sequence>MPLIPYALTRPFLFGLDAEHAHELTLASIARLQNTPLQCLWQQPRIDDPVTLAGVRFPNRIGLAAGLDKNGRCIDGFGAMGFGFIEVGTVTPKGQPGNPKPRIFRLPQAEALINRLGFNNDGLDAFLANVRRAGFRQGGGVLGLNIGKNAATPIEDAVDDYLLGLEGVYPHADYVTVNISSPNTQNLRSLQSDAALDALLGRLQERRQQLIARHGRSVPMFVKIAPDLDEAQVDVIAATLKKNAVDGVIATNTTLSRDAVRGQAHATEVGGLSGRPVFEASNRVVGQLRAALGAGYPIIGVGGVMSGADARAKRDVGADVVQIYTGLIYRGPALVSEAARALKG</sequence>
<name>PYRD_METPP</name>
<accession>A2SHQ5</accession>
<gene>
    <name evidence="1" type="primary">pyrD</name>
    <name type="ordered locus">Mpe_A2138</name>
</gene>
<protein>
    <recommendedName>
        <fullName evidence="1">Dihydroorotate dehydrogenase (quinone)</fullName>
        <ecNumber evidence="1">1.3.5.2</ecNumber>
    </recommendedName>
    <alternativeName>
        <fullName evidence="1">DHOdehase</fullName>
        <shortName evidence="1">DHOD</shortName>
        <shortName evidence="1">DHODase</shortName>
    </alternativeName>
    <alternativeName>
        <fullName evidence="1">Dihydroorotate oxidase</fullName>
    </alternativeName>
</protein>
<keyword id="KW-1003">Cell membrane</keyword>
<keyword id="KW-0285">Flavoprotein</keyword>
<keyword id="KW-0288">FMN</keyword>
<keyword id="KW-0472">Membrane</keyword>
<keyword id="KW-0560">Oxidoreductase</keyword>
<keyword id="KW-0665">Pyrimidine biosynthesis</keyword>
<keyword id="KW-1185">Reference proteome</keyword>
<evidence type="ECO:0000255" key="1">
    <source>
        <dbReference type="HAMAP-Rule" id="MF_00225"/>
    </source>
</evidence>
<dbReference type="EC" id="1.3.5.2" evidence="1"/>
<dbReference type="EMBL" id="CP000555">
    <property type="protein sequence ID" value="ABM95094.1"/>
    <property type="molecule type" value="Genomic_DNA"/>
</dbReference>
<dbReference type="RefSeq" id="WP_011829731.1">
    <property type="nucleotide sequence ID" value="NC_008825.1"/>
</dbReference>
<dbReference type="SMR" id="A2SHQ5"/>
<dbReference type="STRING" id="420662.Mpe_A2138"/>
<dbReference type="KEGG" id="mpt:Mpe_A2138"/>
<dbReference type="eggNOG" id="COG0167">
    <property type="taxonomic scope" value="Bacteria"/>
</dbReference>
<dbReference type="HOGENOM" id="CLU_013640_2_0_4"/>
<dbReference type="UniPathway" id="UPA00070">
    <property type="reaction ID" value="UER00946"/>
</dbReference>
<dbReference type="Proteomes" id="UP000000366">
    <property type="component" value="Chromosome"/>
</dbReference>
<dbReference type="GO" id="GO:0005737">
    <property type="term" value="C:cytoplasm"/>
    <property type="evidence" value="ECO:0007669"/>
    <property type="project" value="InterPro"/>
</dbReference>
<dbReference type="GO" id="GO:0005886">
    <property type="term" value="C:plasma membrane"/>
    <property type="evidence" value="ECO:0007669"/>
    <property type="project" value="UniProtKB-SubCell"/>
</dbReference>
<dbReference type="GO" id="GO:0106430">
    <property type="term" value="F:dihydroorotate dehydrogenase (quinone) activity"/>
    <property type="evidence" value="ECO:0007669"/>
    <property type="project" value="UniProtKB-EC"/>
</dbReference>
<dbReference type="GO" id="GO:0006207">
    <property type="term" value="P:'de novo' pyrimidine nucleobase biosynthetic process"/>
    <property type="evidence" value="ECO:0007669"/>
    <property type="project" value="InterPro"/>
</dbReference>
<dbReference type="GO" id="GO:0044205">
    <property type="term" value="P:'de novo' UMP biosynthetic process"/>
    <property type="evidence" value="ECO:0007669"/>
    <property type="project" value="UniProtKB-UniRule"/>
</dbReference>
<dbReference type="CDD" id="cd04738">
    <property type="entry name" value="DHOD_2_like"/>
    <property type="match status" value="1"/>
</dbReference>
<dbReference type="Gene3D" id="3.20.20.70">
    <property type="entry name" value="Aldolase class I"/>
    <property type="match status" value="1"/>
</dbReference>
<dbReference type="HAMAP" id="MF_00225">
    <property type="entry name" value="DHO_dh_type2"/>
    <property type="match status" value="1"/>
</dbReference>
<dbReference type="InterPro" id="IPR013785">
    <property type="entry name" value="Aldolase_TIM"/>
</dbReference>
<dbReference type="InterPro" id="IPR050074">
    <property type="entry name" value="DHO_dehydrogenase"/>
</dbReference>
<dbReference type="InterPro" id="IPR012135">
    <property type="entry name" value="Dihydroorotate_DH_1_2"/>
</dbReference>
<dbReference type="InterPro" id="IPR005719">
    <property type="entry name" value="Dihydroorotate_DH_2"/>
</dbReference>
<dbReference type="InterPro" id="IPR005720">
    <property type="entry name" value="Dihydroorotate_DH_cat"/>
</dbReference>
<dbReference type="InterPro" id="IPR001295">
    <property type="entry name" value="Dihydroorotate_DH_CS"/>
</dbReference>
<dbReference type="NCBIfam" id="NF003644">
    <property type="entry name" value="PRK05286.1-1"/>
    <property type="match status" value="1"/>
</dbReference>
<dbReference type="NCBIfam" id="NF003645">
    <property type="entry name" value="PRK05286.1-2"/>
    <property type="match status" value="1"/>
</dbReference>
<dbReference type="NCBIfam" id="NF003646">
    <property type="entry name" value="PRK05286.1-4"/>
    <property type="match status" value="1"/>
</dbReference>
<dbReference type="NCBIfam" id="NF003652">
    <property type="entry name" value="PRK05286.2-5"/>
    <property type="match status" value="1"/>
</dbReference>
<dbReference type="NCBIfam" id="TIGR01036">
    <property type="entry name" value="pyrD_sub2"/>
    <property type="match status" value="1"/>
</dbReference>
<dbReference type="PANTHER" id="PTHR48109:SF4">
    <property type="entry name" value="DIHYDROOROTATE DEHYDROGENASE (QUINONE), MITOCHONDRIAL"/>
    <property type="match status" value="1"/>
</dbReference>
<dbReference type="PANTHER" id="PTHR48109">
    <property type="entry name" value="DIHYDROOROTATE DEHYDROGENASE (QUINONE), MITOCHONDRIAL-RELATED"/>
    <property type="match status" value="1"/>
</dbReference>
<dbReference type="Pfam" id="PF01180">
    <property type="entry name" value="DHO_dh"/>
    <property type="match status" value="1"/>
</dbReference>
<dbReference type="PIRSF" id="PIRSF000164">
    <property type="entry name" value="DHO_oxidase"/>
    <property type="match status" value="1"/>
</dbReference>
<dbReference type="SUPFAM" id="SSF51395">
    <property type="entry name" value="FMN-linked oxidoreductases"/>
    <property type="match status" value="1"/>
</dbReference>
<dbReference type="PROSITE" id="PS00911">
    <property type="entry name" value="DHODEHASE_1"/>
    <property type="match status" value="1"/>
</dbReference>